<organism>
    <name type="scientific">Danio rerio</name>
    <name type="common">Zebrafish</name>
    <name type="synonym">Brachydanio rerio</name>
    <dbReference type="NCBI Taxonomy" id="7955"/>
    <lineage>
        <taxon>Eukaryota</taxon>
        <taxon>Metazoa</taxon>
        <taxon>Chordata</taxon>
        <taxon>Craniata</taxon>
        <taxon>Vertebrata</taxon>
        <taxon>Euteleostomi</taxon>
        <taxon>Actinopterygii</taxon>
        <taxon>Neopterygii</taxon>
        <taxon>Teleostei</taxon>
        <taxon>Ostariophysi</taxon>
        <taxon>Cypriniformes</taxon>
        <taxon>Danionidae</taxon>
        <taxon>Danioninae</taxon>
        <taxon>Danio</taxon>
    </lineage>
</organism>
<gene>
    <name type="primary">rpa1</name>
    <name type="ORF">wu:fi14b08</name>
</gene>
<proteinExistence type="evidence at protein level"/>
<accession>Q6NY74</accession>
<dbReference type="EMBL" id="AY648787">
    <property type="protein sequence ID" value="AAT68105.1"/>
    <property type="molecule type" value="mRNA"/>
</dbReference>
<dbReference type="EMBL" id="BC066711">
    <property type="protein sequence ID" value="AAH66711.1"/>
    <property type="molecule type" value="mRNA"/>
</dbReference>
<dbReference type="RefSeq" id="NP_956105.2">
    <property type="nucleotide sequence ID" value="NM_199811.2"/>
</dbReference>
<dbReference type="SMR" id="Q6NY74"/>
<dbReference type="FunCoup" id="Q6NY74">
    <property type="interactions" value="2132"/>
</dbReference>
<dbReference type="STRING" id="7955.ENSDARP00000029067"/>
<dbReference type="iPTMnet" id="Q6NY74"/>
<dbReference type="PaxDb" id="7955-ENSDARP00000029067"/>
<dbReference type="Ensembl" id="ENSDART00000032880">
    <property type="protein sequence ID" value="ENSDARP00000029067"/>
    <property type="gene ID" value="ENSDARG00000003938"/>
</dbReference>
<dbReference type="GeneID" id="327491"/>
<dbReference type="KEGG" id="dre:327491"/>
<dbReference type="AGR" id="ZFIN:ZDB-GENE-030912-3"/>
<dbReference type="CTD" id="6117"/>
<dbReference type="ZFIN" id="ZDB-GENE-030912-3">
    <property type="gene designation" value="rpa1"/>
</dbReference>
<dbReference type="eggNOG" id="KOG0851">
    <property type="taxonomic scope" value="Eukaryota"/>
</dbReference>
<dbReference type="HOGENOM" id="CLU_012393_2_1_1"/>
<dbReference type="InParanoid" id="Q6NY74"/>
<dbReference type="OMA" id="DQCDAFY"/>
<dbReference type="OrthoDB" id="1751331at2759"/>
<dbReference type="PhylomeDB" id="Q6NY74"/>
<dbReference type="TreeFam" id="TF105241"/>
<dbReference type="Reactome" id="R-DRE-110312">
    <property type="pathway name" value="Translesion synthesis by REV1"/>
</dbReference>
<dbReference type="Reactome" id="R-DRE-110314">
    <property type="pathway name" value="Recognition of DNA damage by PCNA-containing replication complex"/>
</dbReference>
<dbReference type="Reactome" id="R-DRE-110320">
    <property type="pathway name" value="Translesion Synthesis by POLH"/>
</dbReference>
<dbReference type="Reactome" id="R-DRE-176187">
    <property type="pathway name" value="Activation of ATR in response to replication stress"/>
</dbReference>
<dbReference type="Reactome" id="R-DRE-3108214">
    <property type="pathway name" value="SUMOylation of DNA damage response and repair proteins"/>
</dbReference>
<dbReference type="Reactome" id="R-DRE-5358565">
    <property type="pathway name" value="Mismatch repair (MMR) directed by MSH2:MSH6 (MutSalpha)"/>
</dbReference>
<dbReference type="Reactome" id="R-DRE-5656121">
    <property type="pathway name" value="Translesion synthesis by POLI"/>
</dbReference>
<dbReference type="Reactome" id="R-DRE-5656169">
    <property type="pathway name" value="Termination of translesion DNA synthesis"/>
</dbReference>
<dbReference type="Reactome" id="R-DRE-5693607">
    <property type="pathway name" value="Processing of DNA double-strand break ends"/>
</dbReference>
<dbReference type="Reactome" id="R-DRE-5696395">
    <property type="pathway name" value="Formation of Incision Complex in GG-NER"/>
</dbReference>
<dbReference type="Reactome" id="R-DRE-5696400">
    <property type="pathway name" value="Dual Incision in GG-NER"/>
</dbReference>
<dbReference type="Reactome" id="R-DRE-6782135">
    <property type="pathway name" value="Dual incision in TC-NER"/>
</dbReference>
<dbReference type="PRO" id="PR:Q6NY74"/>
<dbReference type="Proteomes" id="UP000000437">
    <property type="component" value="Chromosome 15"/>
</dbReference>
<dbReference type="Bgee" id="ENSDARG00000003938">
    <property type="expression patterns" value="Expressed in testis and 31 other cell types or tissues"/>
</dbReference>
<dbReference type="GO" id="GO:0005662">
    <property type="term" value="C:DNA replication factor A complex"/>
    <property type="evidence" value="ECO:0000250"/>
    <property type="project" value="UniProtKB"/>
</dbReference>
<dbReference type="GO" id="GO:0005634">
    <property type="term" value="C:nucleus"/>
    <property type="evidence" value="ECO:0000250"/>
    <property type="project" value="UniProtKB"/>
</dbReference>
<dbReference type="GO" id="GO:0016605">
    <property type="term" value="C:PML body"/>
    <property type="evidence" value="ECO:0007669"/>
    <property type="project" value="UniProtKB-SubCell"/>
</dbReference>
<dbReference type="GO" id="GO:0003684">
    <property type="term" value="F:damaged DNA binding"/>
    <property type="evidence" value="ECO:0000250"/>
    <property type="project" value="UniProtKB"/>
</dbReference>
<dbReference type="GO" id="GO:0003697">
    <property type="term" value="F:single-stranded DNA binding"/>
    <property type="evidence" value="ECO:0000250"/>
    <property type="project" value="UniProtKB"/>
</dbReference>
<dbReference type="GO" id="GO:0043047">
    <property type="term" value="F:single-stranded telomeric DNA binding"/>
    <property type="evidence" value="ECO:0000318"/>
    <property type="project" value="GO_Central"/>
</dbReference>
<dbReference type="GO" id="GO:0008270">
    <property type="term" value="F:zinc ion binding"/>
    <property type="evidence" value="ECO:0007669"/>
    <property type="project" value="UniProtKB-KW"/>
</dbReference>
<dbReference type="GO" id="GO:0006260">
    <property type="term" value="P:DNA replication"/>
    <property type="evidence" value="ECO:0000250"/>
    <property type="project" value="UniProtKB"/>
</dbReference>
<dbReference type="GO" id="GO:0000724">
    <property type="term" value="P:double-strand break repair via homologous recombination"/>
    <property type="evidence" value="ECO:0000318"/>
    <property type="project" value="GO_Central"/>
</dbReference>
<dbReference type="GO" id="GO:0007507">
    <property type="term" value="P:heart development"/>
    <property type="evidence" value="ECO:0000315"/>
    <property type="project" value="ZFIN"/>
</dbReference>
<dbReference type="GO" id="GO:0051321">
    <property type="term" value="P:meiotic cell cycle"/>
    <property type="evidence" value="ECO:0000318"/>
    <property type="project" value="GO_Central"/>
</dbReference>
<dbReference type="GO" id="GO:0006289">
    <property type="term" value="P:nucleotide-excision repair"/>
    <property type="evidence" value="ECO:0000318"/>
    <property type="project" value="GO_Central"/>
</dbReference>
<dbReference type="GO" id="GO:0034502">
    <property type="term" value="P:protein localization to chromosome"/>
    <property type="evidence" value="ECO:0000250"/>
    <property type="project" value="UniProtKB"/>
</dbReference>
<dbReference type="GO" id="GO:0007004">
    <property type="term" value="P:telomere maintenance via telomerase"/>
    <property type="evidence" value="ECO:0000318"/>
    <property type="project" value="GO_Central"/>
</dbReference>
<dbReference type="CDD" id="cd04474">
    <property type="entry name" value="RPA1_DBD_A"/>
    <property type="match status" value="1"/>
</dbReference>
<dbReference type="CDD" id="cd04475">
    <property type="entry name" value="RPA1_DBD_B"/>
    <property type="match status" value="1"/>
</dbReference>
<dbReference type="CDD" id="cd04476">
    <property type="entry name" value="RPA1_DBD_C"/>
    <property type="match status" value="1"/>
</dbReference>
<dbReference type="CDD" id="cd04477">
    <property type="entry name" value="RPA1N"/>
    <property type="match status" value="1"/>
</dbReference>
<dbReference type="FunFam" id="2.40.50.140:FF:000041">
    <property type="entry name" value="Replication protein A subunit"/>
    <property type="match status" value="1"/>
</dbReference>
<dbReference type="FunFam" id="2.40.50.140:FF:000064">
    <property type="entry name" value="Replication protein A subunit"/>
    <property type="match status" value="1"/>
</dbReference>
<dbReference type="FunFam" id="2.40.50.140:FF:000090">
    <property type="entry name" value="Replication protein A subunit"/>
    <property type="match status" value="1"/>
</dbReference>
<dbReference type="FunFam" id="2.40.50.140:FF:000117">
    <property type="entry name" value="Replication protein A subunit"/>
    <property type="match status" value="1"/>
</dbReference>
<dbReference type="Gene3D" id="2.40.50.140">
    <property type="entry name" value="Nucleic acid-binding proteins"/>
    <property type="match status" value="4"/>
</dbReference>
<dbReference type="InterPro" id="IPR047192">
    <property type="entry name" value="Euk_RPA1_DBD_C"/>
</dbReference>
<dbReference type="InterPro" id="IPR012340">
    <property type="entry name" value="NA-bd_OB-fold"/>
</dbReference>
<dbReference type="InterPro" id="IPR004365">
    <property type="entry name" value="NA-bd_OB_tRNA"/>
</dbReference>
<dbReference type="InterPro" id="IPR013955">
    <property type="entry name" value="Rep_factor-A_C"/>
</dbReference>
<dbReference type="InterPro" id="IPR007199">
    <property type="entry name" value="Rep_factor-A_N"/>
</dbReference>
<dbReference type="InterPro" id="IPR031657">
    <property type="entry name" value="REPA_OB_2"/>
</dbReference>
<dbReference type="InterPro" id="IPR004591">
    <property type="entry name" value="Rfa1"/>
</dbReference>
<dbReference type="NCBIfam" id="TIGR00617">
    <property type="entry name" value="rpa1"/>
    <property type="match status" value="1"/>
</dbReference>
<dbReference type="PANTHER" id="PTHR47165">
    <property type="entry name" value="OS03G0429900 PROTEIN"/>
    <property type="match status" value="1"/>
</dbReference>
<dbReference type="PANTHER" id="PTHR47165:SF4">
    <property type="entry name" value="OS03G0429900 PROTEIN"/>
    <property type="match status" value="1"/>
</dbReference>
<dbReference type="Pfam" id="PF04057">
    <property type="entry name" value="Rep-A_N"/>
    <property type="match status" value="1"/>
</dbReference>
<dbReference type="Pfam" id="PF08646">
    <property type="entry name" value="Rep_fac-A_C"/>
    <property type="match status" value="1"/>
</dbReference>
<dbReference type="Pfam" id="PF16900">
    <property type="entry name" value="REPA_OB_2"/>
    <property type="match status" value="1"/>
</dbReference>
<dbReference type="Pfam" id="PF01336">
    <property type="entry name" value="tRNA_anti-codon"/>
    <property type="match status" value="1"/>
</dbReference>
<dbReference type="SUPFAM" id="SSF50249">
    <property type="entry name" value="Nucleic acid-binding proteins"/>
    <property type="match status" value="4"/>
</dbReference>
<name>RFA1_DANRE</name>
<sequence>MTVRLSEGAIESLSKGTEVNNPILQCVNIRKIDGGNGVSRFRVMMSDGLHTMSSFMLSTQLNPMAEQNQLATNCVCVLKRSVTNVLKDGRRVVVILDIEVLKSADQMPGKIGDPTPYVEGQSKAPSTAPAPTARPLQPQNGSDGSTYRPSAQSFGKKPMAAPNTPGGSSKVVPIASLNPYQSKWTIRARVTNKSAIRTWSNSRGDGKLFSMELVDESGEIRATGFNNEVDKFFSLIEQGKVFYISKGTLKIANKQFSSLKNDYEMTLNGETSIIPCEDSNDVPMLQCDFVSIADLESREKDTILDVIGVCKNAEDVARIMTKNSREVSKRNIQLIDMSGRVIQLTMWGSDAETFDGSGQPILAIKGARLSDFGGRSLSTLYSSTVMINPDIPEAYKLRGWYDKEGHALDGQSMTELRGPGGGGNTNWKTLAEVKNEHLGHGDKADYFSCIATIVYIRKENCLYQACPSKDCNKKVVDQQNGMFRCEKCDKEFPDFKYRLMLSANIADFGDNQWVTCFQDTAETLLGQNSSYLGQLKDTNEAAFDEVFQHANFNTFVFRNRVKLETYNDESRIKVTVVDAKPVDHREYSKRLIINIRKLAAQ</sequence>
<feature type="chain" id="PRO_0000097265" description="Replication protein A 70 kDa DNA-binding subunit">
    <location>
        <begin position="1"/>
        <end position="601"/>
    </location>
</feature>
<feature type="DNA-binding region" description="OB">
    <location>
        <begin position="184"/>
        <end position="268"/>
    </location>
</feature>
<feature type="zinc finger region" description="C4-type" evidence="2">
    <location>
        <begin position="466"/>
        <end position="488"/>
    </location>
</feature>
<feature type="region of interest" description="Disordered" evidence="3">
    <location>
        <begin position="107"/>
        <end position="172"/>
    </location>
</feature>
<feature type="compositionally biased region" description="Low complexity" evidence="3">
    <location>
        <begin position="124"/>
        <end position="135"/>
    </location>
</feature>
<feature type="compositionally biased region" description="Polar residues" evidence="3">
    <location>
        <begin position="137"/>
        <end position="153"/>
    </location>
</feature>
<feature type="modified residue" description="Phosphoserine" evidence="4">
    <location>
        <position position="370"/>
    </location>
</feature>
<evidence type="ECO:0000250" key="1">
    <source>
        <dbReference type="UniProtKB" id="P27694"/>
    </source>
</evidence>
<evidence type="ECO:0000255" key="2"/>
<evidence type="ECO:0000256" key="3">
    <source>
        <dbReference type="SAM" id="MobiDB-lite"/>
    </source>
</evidence>
<evidence type="ECO:0000269" key="4">
    <source>
    </source>
</evidence>
<evidence type="ECO:0000305" key="5"/>
<keyword id="KW-0235">DNA replication</keyword>
<keyword id="KW-0238">DNA-binding</keyword>
<keyword id="KW-0479">Metal-binding</keyword>
<keyword id="KW-0539">Nucleus</keyword>
<keyword id="KW-0597">Phosphoprotein</keyword>
<keyword id="KW-1185">Reference proteome</keyword>
<keyword id="KW-0862">Zinc</keyword>
<keyword id="KW-0863">Zinc-finger</keyword>
<reference key="1">
    <citation type="journal article" date="2004" name="Proc. Natl. Acad. Sci. U.S.A.">
        <title>Identification of 315 genes essential for early zebrafish development.</title>
        <authorList>
            <person name="Amsterdam A."/>
            <person name="Nissen R.M."/>
            <person name="Sun Z."/>
            <person name="Swindell E.C."/>
            <person name="Farrington S."/>
            <person name="Hopkins N."/>
        </authorList>
    </citation>
    <scope>NUCLEOTIDE SEQUENCE [LARGE SCALE MRNA]</scope>
</reference>
<reference key="2">
    <citation type="submission" date="2004-03" db="EMBL/GenBank/DDBJ databases">
        <authorList>
            <consortium name="NIH - Zebrafish Gene Collection (ZGC) project"/>
        </authorList>
    </citation>
    <scope>NUCLEOTIDE SEQUENCE [LARGE SCALE MRNA]</scope>
    <source>
        <tissue>Kidney</tissue>
    </source>
</reference>
<reference key="3">
    <citation type="journal article" date="2008" name="J. Proteome Res.">
        <title>Online automated in vivo zebrafish phosphoproteomics: from large-scale analysis down to a single embryo.</title>
        <authorList>
            <person name="Lemeer S."/>
            <person name="Pinkse M.W.H."/>
            <person name="Mohammed S."/>
            <person name="van Breukelen B."/>
            <person name="den Hertog J."/>
            <person name="Slijper M."/>
            <person name="Heck A.J.R."/>
        </authorList>
    </citation>
    <scope>PHOSPHORYLATION [LARGE SCALE ANALYSIS] AT SER-370</scope>
    <scope>IDENTIFICATION BY MASS SPECTROMETRY</scope>
    <source>
        <tissue>Embryo</tissue>
    </source>
</reference>
<protein>
    <recommendedName>
        <fullName>Replication protein A 70 kDa DNA-binding subunit</fullName>
        <shortName>RP-A p70</shortName>
    </recommendedName>
    <alternativeName>
        <fullName>Replication factor A protein 1</fullName>
        <shortName>RF-A protein 1</shortName>
    </alternativeName>
</protein>
<comment type="function">
    <text evidence="1">As part of the heterotrimeric replication protein A complex (RPA/RP-A), binds and stabilizes single-stranded DNA intermediates, that form during DNA replication or upon DNA stress. It prevents their reannealing and in parallel, recruits and activates different proteins and complexes involved in DNA metabolism. Thereby, it plays an essential role both in DNA replication and the cellular response to DNA damage.</text>
</comment>
<comment type="subunit">
    <text evidence="1">Component of the heterotrimeric canonical replication protein A complex (RPA).</text>
</comment>
<comment type="subcellular location">
    <subcellularLocation>
        <location evidence="1">Nucleus</location>
    </subcellularLocation>
    <subcellularLocation>
        <location evidence="1">Nucleus</location>
        <location evidence="1">PML body</location>
    </subcellularLocation>
</comment>
<comment type="similarity">
    <text evidence="5">Belongs to the replication factor A protein 1 family.</text>
</comment>